<feature type="chain" id="PRO_1000020006" description="Probable cytosol aminopeptidase">
    <location>
        <begin position="1"/>
        <end position="503"/>
    </location>
</feature>
<feature type="active site" evidence="1">
    <location>
        <position position="282"/>
    </location>
</feature>
<feature type="active site" evidence="1">
    <location>
        <position position="356"/>
    </location>
</feature>
<feature type="binding site" evidence="1">
    <location>
        <position position="270"/>
    </location>
    <ligand>
        <name>Mn(2+)</name>
        <dbReference type="ChEBI" id="CHEBI:29035"/>
        <label>2</label>
    </ligand>
</feature>
<feature type="binding site" evidence="1">
    <location>
        <position position="275"/>
    </location>
    <ligand>
        <name>Mn(2+)</name>
        <dbReference type="ChEBI" id="CHEBI:29035"/>
        <label>1</label>
    </ligand>
</feature>
<feature type="binding site" evidence="1">
    <location>
        <position position="275"/>
    </location>
    <ligand>
        <name>Mn(2+)</name>
        <dbReference type="ChEBI" id="CHEBI:29035"/>
        <label>2</label>
    </ligand>
</feature>
<feature type="binding site" evidence="1">
    <location>
        <position position="293"/>
    </location>
    <ligand>
        <name>Mn(2+)</name>
        <dbReference type="ChEBI" id="CHEBI:29035"/>
        <label>2</label>
    </ligand>
</feature>
<feature type="binding site" evidence="1">
    <location>
        <position position="352"/>
    </location>
    <ligand>
        <name>Mn(2+)</name>
        <dbReference type="ChEBI" id="CHEBI:29035"/>
        <label>1</label>
    </ligand>
</feature>
<feature type="binding site" evidence="1">
    <location>
        <position position="354"/>
    </location>
    <ligand>
        <name>Mn(2+)</name>
        <dbReference type="ChEBI" id="CHEBI:29035"/>
        <label>1</label>
    </ligand>
</feature>
<feature type="binding site" evidence="1">
    <location>
        <position position="354"/>
    </location>
    <ligand>
        <name>Mn(2+)</name>
        <dbReference type="ChEBI" id="CHEBI:29035"/>
        <label>2</label>
    </ligand>
</feature>
<proteinExistence type="inferred from homology"/>
<reference key="1">
    <citation type="submission" date="2007-02" db="EMBL/GenBank/DDBJ databases">
        <title>Complete sequence of chromosome of Yersinia pestis Pestoides F.</title>
        <authorList>
            <consortium name="US DOE Joint Genome Institute"/>
            <person name="Copeland A."/>
            <person name="Lucas S."/>
            <person name="Lapidus A."/>
            <person name="Barry K."/>
            <person name="Detter J.C."/>
            <person name="Glavina del Rio T."/>
            <person name="Hammon N."/>
            <person name="Israni S."/>
            <person name="Dalin E."/>
            <person name="Tice H."/>
            <person name="Pitluck S."/>
            <person name="Di Bartolo G."/>
            <person name="Chain P."/>
            <person name="Malfatti S."/>
            <person name="Shin M."/>
            <person name="Vergez L."/>
            <person name="Schmutz J."/>
            <person name="Larimer F."/>
            <person name="Land M."/>
            <person name="Hauser L."/>
            <person name="Worsham P."/>
            <person name="Chu M."/>
            <person name="Bearden S."/>
            <person name="Garcia E."/>
            <person name="Richardson P."/>
        </authorList>
    </citation>
    <scope>NUCLEOTIDE SEQUENCE [LARGE SCALE GENOMIC DNA]</scope>
    <source>
        <strain>Pestoides F</strain>
    </source>
</reference>
<protein>
    <recommendedName>
        <fullName evidence="1">Probable cytosol aminopeptidase</fullName>
        <ecNumber evidence="1">3.4.11.1</ecNumber>
    </recommendedName>
    <alternativeName>
        <fullName evidence="1">Leucine aminopeptidase</fullName>
        <shortName evidence="1">LAP</shortName>
        <ecNumber evidence="1">3.4.11.10</ecNumber>
    </alternativeName>
    <alternativeName>
        <fullName evidence="1">Leucyl aminopeptidase</fullName>
    </alternativeName>
</protein>
<dbReference type="EC" id="3.4.11.1" evidence="1"/>
<dbReference type="EC" id="3.4.11.10" evidence="1"/>
<dbReference type="EMBL" id="CP000668">
    <property type="protein sequence ID" value="ABP41608.1"/>
    <property type="molecule type" value="Genomic_DNA"/>
</dbReference>
<dbReference type="RefSeq" id="WP_002209310.1">
    <property type="nucleotide sequence ID" value="NZ_CP009715.1"/>
</dbReference>
<dbReference type="SMR" id="A4TQP6"/>
<dbReference type="MEROPS" id="M17.003"/>
<dbReference type="GeneID" id="57975268"/>
<dbReference type="KEGG" id="ypp:YPDSF_3251"/>
<dbReference type="PATRIC" id="fig|386656.14.peg.1091"/>
<dbReference type="GO" id="GO:0005737">
    <property type="term" value="C:cytoplasm"/>
    <property type="evidence" value="ECO:0007669"/>
    <property type="project" value="UniProtKB-SubCell"/>
</dbReference>
<dbReference type="GO" id="GO:0030145">
    <property type="term" value="F:manganese ion binding"/>
    <property type="evidence" value="ECO:0007669"/>
    <property type="project" value="UniProtKB-UniRule"/>
</dbReference>
<dbReference type="GO" id="GO:0070006">
    <property type="term" value="F:metalloaminopeptidase activity"/>
    <property type="evidence" value="ECO:0007669"/>
    <property type="project" value="InterPro"/>
</dbReference>
<dbReference type="GO" id="GO:0006508">
    <property type="term" value="P:proteolysis"/>
    <property type="evidence" value="ECO:0007669"/>
    <property type="project" value="UniProtKB-KW"/>
</dbReference>
<dbReference type="CDD" id="cd00433">
    <property type="entry name" value="Peptidase_M17"/>
    <property type="match status" value="1"/>
</dbReference>
<dbReference type="FunFam" id="3.40.220.10:FF:000001">
    <property type="entry name" value="Probable cytosol aminopeptidase"/>
    <property type="match status" value="1"/>
</dbReference>
<dbReference type="FunFam" id="3.40.630.10:FF:000004">
    <property type="entry name" value="Probable cytosol aminopeptidase"/>
    <property type="match status" value="1"/>
</dbReference>
<dbReference type="Gene3D" id="3.40.220.10">
    <property type="entry name" value="Leucine Aminopeptidase, subunit E, domain 1"/>
    <property type="match status" value="1"/>
</dbReference>
<dbReference type="Gene3D" id="3.40.630.10">
    <property type="entry name" value="Zn peptidases"/>
    <property type="match status" value="1"/>
</dbReference>
<dbReference type="HAMAP" id="MF_00181">
    <property type="entry name" value="Cytosol_peptidase_M17"/>
    <property type="match status" value="1"/>
</dbReference>
<dbReference type="InterPro" id="IPR011356">
    <property type="entry name" value="Leucine_aapep/pepB"/>
</dbReference>
<dbReference type="InterPro" id="IPR043472">
    <property type="entry name" value="Macro_dom-like"/>
</dbReference>
<dbReference type="InterPro" id="IPR000819">
    <property type="entry name" value="Peptidase_M17_C"/>
</dbReference>
<dbReference type="InterPro" id="IPR023042">
    <property type="entry name" value="Peptidase_M17_leu_NH2_pept"/>
</dbReference>
<dbReference type="InterPro" id="IPR008283">
    <property type="entry name" value="Peptidase_M17_N"/>
</dbReference>
<dbReference type="NCBIfam" id="NF002072">
    <property type="entry name" value="PRK00913.1-1"/>
    <property type="match status" value="1"/>
</dbReference>
<dbReference type="NCBIfam" id="NF002074">
    <property type="entry name" value="PRK00913.1-4"/>
    <property type="match status" value="1"/>
</dbReference>
<dbReference type="PANTHER" id="PTHR11963:SF23">
    <property type="entry name" value="CYTOSOL AMINOPEPTIDASE"/>
    <property type="match status" value="1"/>
</dbReference>
<dbReference type="PANTHER" id="PTHR11963">
    <property type="entry name" value="LEUCINE AMINOPEPTIDASE-RELATED"/>
    <property type="match status" value="1"/>
</dbReference>
<dbReference type="Pfam" id="PF00883">
    <property type="entry name" value="Peptidase_M17"/>
    <property type="match status" value="1"/>
</dbReference>
<dbReference type="Pfam" id="PF02789">
    <property type="entry name" value="Peptidase_M17_N"/>
    <property type="match status" value="1"/>
</dbReference>
<dbReference type="PRINTS" id="PR00481">
    <property type="entry name" value="LAMNOPPTDASE"/>
</dbReference>
<dbReference type="SUPFAM" id="SSF52949">
    <property type="entry name" value="Macro domain-like"/>
    <property type="match status" value="1"/>
</dbReference>
<dbReference type="SUPFAM" id="SSF53187">
    <property type="entry name" value="Zn-dependent exopeptidases"/>
    <property type="match status" value="1"/>
</dbReference>
<dbReference type="PROSITE" id="PS00631">
    <property type="entry name" value="CYTOSOL_AP"/>
    <property type="match status" value="1"/>
</dbReference>
<accession>A4TQP6</accession>
<organism>
    <name type="scientific">Yersinia pestis (strain Pestoides F)</name>
    <dbReference type="NCBI Taxonomy" id="386656"/>
    <lineage>
        <taxon>Bacteria</taxon>
        <taxon>Pseudomonadati</taxon>
        <taxon>Pseudomonadota</taxon>
        <taxon>Gammaproteobacteria</taxon>
        <taxon>Enterobacterales</taxon>
        <taxon>Yersiniaceae</taxon>
        <taxon>Yersinia</taxon>
    </lineage>
</organism>
<keyword id="KW-0031">Aminopeptidase</keyword>
<keyword id="KW-0963">Cytoplasm</keyword>
<keyword id="KW-0378">Hydrolase</keyword>
<keyword id="KW-0464">Manganese</keyword>
<keyword id="KW-0479">Metal-binding</keyword>
<keyword id="KW-0645">Protease</keyword>
<gene>
    <name evidence="1" type="primary">pepA</name>
    <name type="ordered locus">YPDSF_3251</name>
</gene>
<sequence>MEFSVKSGSPEKQRSACIVVGVFEPRRLSPIAEQLDKISDGYISALLRRGELEGKVGQTLLLHHVPNILSERILLIGCGKERELDERQYKQVIQKTINTLNDTGSMEAVCFLTELHVKGRNTYWKVRQAVETAKETLYTFDQLKSNKTEPRRPLRKMVFNVPTRRELTSGERAIQHGLAIASGIKAAKDLGNMPPNICNAAYLASQARQLADAFSTNTVTRVIGEQQMKELGMHAYLAVGHGSQNESLMSVIEYKGNPNKDAKPIVLVGKGLTFDSGGISIKPAEGMDEMKYDMCGAATVYGVMRVVAELQLPLNVVGVLAGCENMPGGRAYRPGDILTTMSGQTVEVLNTDAEGRLVLCDALTYVERFEPELVIDIATLTGACVVALGNHLTGLMSNHNPLAHELIGASEQAGDRAWRLPLGEEYYEQLDSNFADMANIGGRAGGAITAGCFLSRFTRKYSWAHLDIAGTAWRSGKNKGATGRPVALLSQFLLNRAGLNGDD</sequence>
<evidence type="ECO:0000255" key="1">
    <source>
        <dbReference type="HAMAP-Rule" id="MF_00181"/>
    </source>
</evidence>
<comment type="function">
    <text evidence="1">Presumably involved in the processing and regular turnover of intracellular proteins. Catalyzes the removal of unsubstituted N-terminal amino acids from various peptides.</text>
</comment>
<comment type="catalytic activity">
    <reaction evidence="1">
        <text>Release of an N-terminal amino acid, Xaa-|-Yaa-, in which Xaa is preferably Leu, but may be other amino acids including Pro although not Arg or Lys, and Yaa may be Pro. Amino acid amides and methyl esters are also readily hydrolyzed, but rates on arylamides are exceedingly low.</text>
        <dbReference type="EC" id="3.4.11.1"/>
    </reaction>
</comment>
<comment type="catalytic activity">
    <reaction evidence="1">
        <text>Release of an N-terminal amino acid, preferentially leucine, but not glutamic or aspartic acids.</text>
        <dbReference type="EC" id="3.4.11.10"/>
    </reaction>
</comment>
<comment type="cofactor">
    <cofactor evidence="1">
        <name>Mn(2+)</name>
        <dbReference type="ChEBI" id="CHEBI:29035"/>
    </cofactor>
    <text evidence="1">Binds 2 manganese ions per subunit.</text>
</comment>
<comment type="subcellular location">
    <subcellularLocation>
        <location evidence="1">Cytoplasm</location>
    </subcellularLocation>
</comment>
<comment type="similarity">
    <text evidence="1">Belongs to the peptidase M17 family.</text>
</comment>
<name>AMPA_YERPP</name>